<protein>
    <recommendedName>
        <fullName evidence="2">Small ribosomal subunit protein uS12</fullName>
    </recommendedName>
    <alternativeName>
        <fullName evidence="4">30S ribosomal protein S12</fullName>
    </alternativeName>
</protein>
<reference key="1">
    <citation type="submission" date="2008-10" db="EMBL/GenBank/DDBJ databases">
        <title>The complete genome sequence of Helicobacter pylori strain P12.</title>
        <authorList>
            <person name="Fischer W."/>
            <person name="Windhager L."/>
            <person name="Karnholz A."/>
            <person name="Zeiller M."/>
            <person name="Zimmer R."/>
            <person name="Haas R."/>
        </authorList>
    </citation>
    <scope>NUCLEOTIDE SEQUENCE [LARGE SCALE GENOMIC DNA]</scope>
    <source>
        <strain>P12</strain>
    </source>
</reference>
<name>RS12_HELP2</name>
<dbReference type="EMBL" id="CP001217">
    <property type="protein sequence ID" value="ACJ08314.1"/>
    <property type="molecule type" value="Genomic_DNA"/>
</dbReference>
<dbReference type="SMR" id="B6JN36"/>
<dbReference type="KEGG" id="hpp:HPP12_1162"/>
<dbReference type="HOGENOM" id="CLU_104295_1_2_7"/>
<dbReference type="Proteomes" id="UP000008198">
    <property type="component" value="Chromosome"/>
</dbReference>
<dbReference type="GO" id="GO:0015935">
    <property type="term" value="C:small ribosomal subunit"/>
    <property type="evidence" value="ECO:0007669"/>
    <property type="project" value="InterPro"/>
</dbReference>
<dbReference type="GO" id="GO:0019843">
    <property type="term" value="F:rRNA binding"/>
    <property type="evidence" value="ECO:0007669"/>
    <property type="project" value="UniProtKB-UniRule"/>
</dbReference>
<dbReference type="GO" id="GO:0003735">
    <property type="term" value="F:structural constituent of ribosome"/>
    <property type="evidence" value="ECO:0007669"/>
    <property type="project" value="InterPro"/>
</dbReference>
<dbReference type="GO" id="GO:0000049">
    <property type="term" value="F:tRNA binding"/>
    <property type="evidence" value="ECO:0007669"/>
    <property type="project" value="UniProtKB-UniRule"/>
</dbReference>
<dbReference type="GO" id="GO:0006412">
    <property type="term" value="P:translation"/>
    <property type="evidence" value="ECO:0007669"/>
    <property type="project" value="UniProtKB-UniRule"/>
</dbReference>
<dbReference type="CDD" id="cd03368">
    <property type="entry name" value="Ribosomal_S12"/>
    <property type="match status" value="1"/>
</dbReference>
<dbReference type="FunFam" id="2.40.50.140:FF:000001">
    <property type="entry name" value="30S ribosomal protein S12"/>
    <property type="match status" value="1"/>
</dbReference>
<dbReference type="Gene3D" id="2.40.50.140">
    <property type="entry name" value="Nucleic acid-binding proteins"/>
    <property type="match status" value="1"/>
</dbReference>
<dbReference type="HAMAP" id="MF_00403_B">
    <property type="entry name" value="Ribosomal_uS12_B"/>
    <property type="match status" value="1"/>
</dbReference>
<dbReference type="InterPro" id="IPR012340">
    <property type="entry name" value="NA-bd_OB-fold"/>
</dbReference>
<dbReference type="InterPro" id="IPR006032">
    <property type="entry name" value="Ribosomal_uS12"/>
</dbReference>
<dbReference type="InterPro" id="IPR005679">
    <property type="entry name" value="Ribosomal_uS12_bac"/>
</dbReference>
<dbReference type="NCBIfam" id="TIGR00981">
    <property type="entry name" value="rpsL_bact"/>
    <property type="match status" value="1"/>
</dbReference>
<dbReference type="PANTHER" id="PTHR11652">
    <property type="entry name" value="30S RIBOSOMAL PROTEIN S12 FAMILY MEMBER"/>
    <property type="match status" value="1"/>
</dbReference>
<dbReference type="Pfam" id="PF00164">
    <property type="entry name" value="Ribosom_S12_S23"/>
    <property type="match status" value="1"/>
</dbReference>
<dbReference type="PIRSF" id="PIRSF002133">
    <property type="entry name" value="Ribosomal_S12/S23"/>
    <property type="match status" value="1"/>
</dbReference>
<dbReference type="PRINTS" id="PR01034">
    <property type="entry name" value="RIBOSOMALS12"/>
</dbReference>
<dbReference type="SUPFAM" id="SSF50249">
    <property type="entry name" value="Nucleic acid-binding proteins"/>
    <property type="match status" value="1"/>
</dbReference>
<dbReference type="PROSITE" id="PS00055">
    <property type="entry name" value="RIBOSOMAL_S12"/>
    <property type="match status" value="1"/>
</dbReference>
<comment type="function">
    <text evidence="2">With S4 and S5 plays an important role in translational accuracy.</text>
</comment>
<comment type="function">
    <text evidence="2">Interacts with and stabilizes bases of the 16S rRNA that are involved in tRNA selection in the A site and with the mRNA backbone. Located at the interface of the 30S and 50S subunits, it traverses the body of the 30S subunit contacting proteins on the other side and probably holding the rRNA structure together. The combined cluster of proteins S8, S12 and S17 appears to hold together the shoulder and platform of the 30S subunit.</text>
</comment>
<comment type="subunit">
    <text evidence="2">Part of the 30S ribosomal subunit. Contacts proteins S8 and S17. May interact with IF1 in the 30S initiation complex.</text>
</comment>
<comment type="similarity">
    <text evidence="2">Belongs to the universal ribosomal protein uS12 family.</text>
</comment>
<gene>
    <name evidence="2" type="primary">rpsL</name>
    <name type="ordered locus">HPP12_1162</name>
</gene>
<sequence length="135" mass="15106">MPTINQLIRKERKKVVKKTKSPALVECPQRRGVCTRVYTTTPKKPNSALRKVAKVRLTSKFEVISYIPGEGHNLQEHSIVLVRGGRVKDLPGVKYHIVRGALDTAGVNKRTVSRSKYGTKKAKATDKKATDNKKK</sequence>
<evidence type="ECO:0000250" key="1"/>
<evidence type="ECO:0000255" key="2">
    <source>
        <dbReference type="HAMAP-Rule" id="MF_00403"/>
    </source>
</evidence>
<evidence type="ECO:0000256" key="3">
    <source>
        <dbReference type="SAM" id="MobiDB-lite"/>
    </source>
</evidence>
<evidence type="ECO:0000305" key="4"/>
<proteinExistence type="inferred from homology"/>
<feature type="chain" id="PRO_1000194176" description="Small ribosomal subunit protein uS12">
    <location>
        <begin position="1"/>
        <end position="135"/>
    </location>
</feature>
<feature type="region of interest" description="Disordered" evidence="3">
    <location>
        <begin position="108"/>
        <end position="135"/>
    </location>
</feature>
<feature type="compositionally biased region" description="Basic residues" evidence="3">
    <location>
        <begin position="111"/>
        <end position="122"/>
    </location>
</feature>
<feature type="compositionally biased region" description="Basic and acidic residues" evidence="3">
    <location>
        <begin position="123"/>
        <end position="135"/>
    </location>
</feature>
<feature type="modified residue" description="3-methylthioaspartic acid" evidence="1">
    <location>
        <position position="89"/>
    </location>
</feature>
<accession>B6JN36</accession>
<keyword id="KW-0488">Methylation</keyword>
<keyword id="KW-0687">Ribonucleoprotein</keyword>
<keyword id="KW-0689">Ribosomal protein</keyword>
<keyword id="KW-0694">RNA-binding</keyword>
<keyword id="KW-0699">rRNA-binding</keyword>
<keyword id="KW-0820">tRNA-binding</keyword>
<organism>
    <name type="scientific">Helicobacter pylori (strain P12)</name>
    <dbReference type="NCBI Taxonomy" id="570508"/>
    <lineage>
        <taxon>Bacteria</taxon>
        <taxon>Pseudomonadati</taxon>
        <taxon>Campylobacterota</taxon>
        <taxon>Epsilonproteobacteria</taxon>
        <taxon>Campylobacterales</taxon>
        <taxon>Helicobacteraceae</taxon>
        <taxon>Helicobacter</taxon>
    </lineage>
</organism>